<protein>
    <recommendedName>
        <fullName evidence="1">Catalase-peroxidase</fullName>
        <shortName evidence="1">CP</shortName>
        <ecNumber evidence="1">1.11.1.21</ecNumber>
    </recommendedName>
    <alternativeName>
        <fullName evidence="1">Peroxidase/catalase</fullName>
    </alternativeName>
</protein>
<feature type="signal peptide" evidence="1">
    <location>
        <begin position="1"/>
        <end position="22"/>
    </location>
</feature>
<feature type="chain" id="PRO_0000354723" description="Catalase-peroxidase">
    <location>
        <begin position="23"/>
        <end position="744"/>
    </location>
</feature>
<feature type="active site" description="Proton acceptor" evidence="1">
    <location>
        <position position="115"/>
    </location>
</feature>
<feature type="binding site" description="axial binding residue" evidence="1">
    <location>
        <position position="275"/>
    </location>
    <ligand>
        <name>heme b</name>
        <dbReference type="ChEBI" id="CHEBI:60344"/>
    </ligand>
    <ligandPart>
        <name>Fe</name>
        <dbReference type="ChEBI" id="CHEBI:18248"/>
    </ligandPart>
</feature>
<feature type="site" description="Transition state stabilizer" evidence="1">
    <location>
        <position position="111"/>
    </location>
</feature>
<feature type="cross-link" description="Tryptophyl-tyrosyl-methioninium (Trp-Tyr) (with M-260)" evidence="1">
    <location>
        <begin position="114"/>
        <end position="234"/>
    </location>
</feature>
<feature type="cross-link" description="Tryptophyl-tyrosyl-methioninium (Tyr-Met) (with W-114)" evidence="1">
    <location>
        <begin position="234"/>
        <end position="260"/>
    </location>
</feature>
<gene>
    <name evidence="1" type="primary">katG</name>
    <name type="ordered locus">AZC_3290</name>
</gene>
<name>KATG_AZOC5</name>
<evidence type="ECO:0000255" key="1">
    <source>
        <dbReference type="HAMAP-Rule" id="MF_01961"/>
    </source>
</evidence>
<dbReference type="EC" id="1.11.1.21" evidence="1"/>
<dbReference type="EMBL" id="AP009384">
    <property type="protein sequence ID" value="BAF89288.1"/>
    <property type="molecule type" value="Genomic_DNA"/>
</dbReference>
<dbReference type="SMR" id="A8IHK8"/>
<dbReference type="STRING" id="438753.AZC_3290"/>
<dbReference type="PeroxiBase" id="6665">
    <property type="entry name" value="AZcaCP01"/>
</dbReference>
<dbReference type="KEGG" id="azc:AZC_3290"/>
<dbReference type="eggNOG" id="COG0376">
    <property type="taxonomic scope" value="Bacteria"/>
</dbReference>
<dbReference type="HOGENOM" id="CLU_025424_2_0_5"/>
<dbReference type="Proteomes" id="UP000000270">
    <property type="component" value="Chromosome"/>
</dbReference>
<dbReference type="GO" id="GO:0005829">
    <property type="term" value="C:cytosol"/>
    <property type="evidence" value="ECO:0007669"/>
    <property type="project" value="TreeGrafter"/>
</dbReference>
<dbReference type="GO" id="GO:0004096">
    <property type="term" value="F:catalase activity"/>
    <property type="evidence" value="ECO:0007669"/>
    <property type="project" value="UniProtKB-UniRule"/>
</dbReference>
<dbReference type="GO" id="GO:0020037">
    <property type="term" value="F:heme binding"/>
    <property type="evidence" value="ECO:0007669"/>
    <property type="project" value="InterPro"/>
</dbReference>
<dbReference type="GO" id="GO:0046872">
    <property type="term" value="F:metal ion binding"/>
    <property type="evidence" value="ECO:0007669"/>
    <property type="project" value="UniProtKB-KW"/>
</dbReference>
<dbReference type="GO" id="GO:0070301">
    <property type="term" value="P:cellular response to hydrogen peroxide"/>
    <property type="evidence" value="ECO:0007669"/>
    <property type="project" value="TreeGrafter"/>
</dbReference>
<dbReference type="GO" id="GO:0042744">
    <property type="term" value="P:hydrogen peroxide catabolic process"/>
    <property type="evidence" value="ECO:0007669"/>
    <property type="project" value="UniProtKB-KW"/>
</dbReference>
<dbReference type="CDD" id="cd00649">
    <property type="entry name" value="catalase_peroxidase_1"/>
    <property type="match status" value="1"/>
</dbReference>
<dbReference type="CDD" id="cd08200">
    <property type="entry name" value="catalase_peroxidase_2"/>
    <property type="match status" value="1"/>
</dbReference>
<dbReference type="FunFam" id="1.10.420.10:FF:000002">
    <property type="entry name" value="Catalase-peroxidase"/>
    <property type="match status" value="1"/>
</dbReference>
<dbReference type="FunFam" id="1.10.420.10:FF:000004">
    <property type="entry name" value="Catalase-peroxidase"/>
    <property type="match status" value="1"/>
</dbReference>
<dbReference type="FunFam" id="1.10.520.10:FF:000002">
    <property type="entry name" value="Catalase-peroxidase"/>
    <property type="match status" value="1"/>
</dbReference>
<dbReference type="Gene3D" id="1.10.520.10">
    <property type="match status" value="2"/>
</dbReference>
<dbReference type="Gene3D" id="1.10.420.10">
    <property type="entry name" value="Peroxidase, domain 2"/>
    <property type="match status" value="2"/>
</dbReference>
<dbReference type="HAMAP" id="MF_01961">
    <property type="entry name" value="Catal_peroxid"/>
    <property type="match status" value="1"/>
</dbReference>
<dbReference type="InterPro" id="IPR000763">
    <property type="entry name" value="Catalase_peroxidase"/>
</dbReference>
<dbReference type="InterPro" id="IPR002016">
    <property type="entry name" value="Haem_peroxidase"/>
</dbReference>
<dbReference type="InterPro" id="IPR010255">
    <property type="entry name" value="Haem_peroxidase_sf"/>
</dbReference>
<dbReference type="InterPro" id="IPR019794">
    <property type="entry name" value="Peroxidases_AS"/>
</dbReference>
<dbReference type="InterPro" id="IPR019793">
    <property type="entry name" value="Peroxidases_heam-ligand_BS"/>
</dbReference>
<dbReference type="NCBIfam" id="TIGR00198">
    <property type="entry name" value="cat_per_HPI"/>
    <property type="match status" value="1"/>
</dbReference>
<dbReference type="NCBIfam" id="NF011635">
    <property type="entry name" value="PRK15061.1"/>
    <property type="match status" value="1"/>
</dbReference>
<dbReference type="PANTHER" id="PTHR30555:SF0">
    <property type="entry name" value="CATALASE-PEROXIDASE"/>
    <property type="match status" value="1"/>
</dbReference>
<dbReference type="PANTHER" id="PTHR30555">
    <property type="entry name" value="HYDROPEROXIDASE I, BIFUNCTIONAL CATALASE-PEROXIDASE"/>
    <property type="match status" value="1"/>
</dbReference>
<dbReference type="Pfam" id="PF00141">
    <property type="entry name" value="peroxidase"/>
    <property type="match status" value="2"/>
</dbReference>
<dbReference type="PRINTS" id="PR00460">
    <property type="entry name" value="BPEROXIDASE"/>
</dbReference>
<dbReference type="PRINTS" id="PR00458">
    <property type="entry name" value="PEROXIDASE"/>
</dbReference>
<dbReference type="SUPFAM" id="SSF48113">
    <property type="entry name" value="Heme-dependent peroxidases"/>
    <property type="match status" value="2"/>
</dbReference>
<dbReference type="PROSITE" id="PS00435">
    <property type="entry name" value="PEROXIDASE_1"/>
    <property type="match status" value="1"/>
</dbReference>
<dbReference type="PROSITE" id="PS00436">
    <property type="entry name" value="PEROXIDASE_2"/>
    <property type="match status" value="1"/>
</dbReference>
<dbReference type="PROSITE" id="PS50873">
    <property type="entry name" value="PEROXIDASE_4"/>
    <property type="match status" value="1"/>
</dbReference>
<accession>A8IHK8</accession>
<organism>
    <name type="scientific">Azorhizobium caulinodans (strain ATCC 43989 / DSM 5975 / JCM 20966 / LMG 6465 / NBRC 14845 / NCIMB 13405 / ORS 571)</name>
    <dbReference type="NCBI Taxonomy" id="438753"/>
    <lineage>
        <taxon>Bacteria</taxon>
        <taxon>Pseudomonadati</taxon>
        <taxon>Pseudomonadota</taxon>
        <taxon>Alphaproteobacteria</taxon>
        <taxon>Hyphomicrobiales</taxon>
        <taxon>Xanthobacteraceae</taxon>
        <taxon>Azorhizobium</taxon>
    </lineage>
</organism>
<keyword id="KW-0349">Heme</keyword>
<keyword id="KW-0376">Hydrogen peroxide</keyword>
<keyword id="KW-0408">Iron</keyword>
<keyword id="KW-0479">Metal-binding</keyword>
<keyword id="KW-0560">Oxidoreductase</keyword>
<keyword id="KW-0575">Peroxidase</keyword>
<keyword id="KW-1185">Reference proteome</keyword>
<keyword id="KW-0732">Signal</keyword>
<proteinExistence type="inferred from homology"/>
<comment type="function">
    <text evidence="1">Bifunctional enzyme with both catalase and broad-spectrum peroxidase activity.</text>
</comment>
<comment type="catalytic activity">
    <reaction evidence="1">
        <text>H2O2 + AH2 = A + 2 H2O</text>
        <dbReference type="Rhea" id="RHEA:30275"/>
        <dbReference type="ChEBI" id="CHEBI:13193"/>
        <dbReference type="ChEBI" id="CHEBI:15377"/>
        <dbReference type="ChEBI" id="CHEBI:16240"/>
        <dbReference type="ChEBI" id="CHEBI:17499"/>
        <dbReference type="EC" id="1.11.1.21"/>
    </reaction>
</comment>
<comment type="catalytic activity">
    <reaction evidence="1">
        <text>2 H2O2 = O2 + 2 H2O</text>
        <dbReference type="Rhea" id="RHEA:20309"/>
        <dbReference type="ChEBI" id="CHEBI:15377"/>
        <dbReference type="ChEBI" id="CHEBI:15379"/>
        <dbReference type="ChEBI" id="CHEBI:16240"/>
        <dbReference type="EC" id="1.11.1.21"/>
    </reaction>
</comment>
<comment type="cofactor">
    <cofactor evidence="1">
        <name>heme b</name>
        <dbReference type="ChEBI" id="CHEBI:60344"/>
    </cofactor>
    <text evidence="1">Binds 1 heme b (iron(II)-protoporphyrin IX) group per dimer.</text>
</comment>
<comment type="subunit">
    <text evidence="1">Homodimer or homotetramer.</text>
</comment>
<comment type="PTM">
    <text evidence="1">Formation of the three residue Trp-Tyr-Met cross-link is important for the catalase, but not the peroxidase activity of the enzyme.</text>
</comment>
<comment type="similarity">
    <text evidence="1">Belongs to the peroxidase family. Peroxidase/catalase subfamily.</text>
</comment>
<reference key="1">
    <citation type="submission" date="2007-04" db="EMBL/GenBank/DDBJ databases">
        <title>Complete genome sequence of the nitrogen-fixing bacterium Azorhizobium caulinodans ORS571.</title>
        <authorList>
            <person name="Lee K.B."/>
            <person name="Backer P.D."/>
            <person name="Aono T."/>
            <person name="Liu C.T."/>
            <person name="Suzuki S."/>
            <person name="Suzuki T."/>
            <person name="Kaneko T."/>
            <person name="Yamada M."/>
            <person name="Tabata S."/>
            <person name="Kupfer D.M."/>
            <person name="Najar F.Z."/>
            <person name="Wiley G.B."/>
            <person name="Roe B."/>
            <person name="Binnewies T."/>
            <person name="Ussery D."/>
            <person name="Vereecke D."/>
            <person name="Gevers D."/>
            <person name="Holsters M."/>
            <person name="Oyaizu H."/>
        </authorList>
    </citation>
    <scope>NUCLEOTIDE SEQUENCE [LARGE SCALE GENOMIC DNA]</scope>
    <source>
        <strain>ATCC 43989 / DSM 5975 / JCM 20966 / LMG 6465 / NBRC 14845 / NCIMB 13405 / ORS 571</strain>
    </source>
</reference>
<sequence length="744" mass="81788">MSPRARRCTDRCARMSERSMNATTETPTGKCPVAHGTGGTQNRDWWPNQLRVDLLNLHSPKSDPLGAAFDYRAEFKKLDYEALKNDLRKLMTDSQDWWPADFGNYGPQFVRMAWHSAGTYRLADGRGGGGRGQQRFAPLNSWPDNVNIDKSRRLLWPIKQKYGQKISWADLMILTGNVALETMGFRTFGFAGGREDTWEPDQDVFWGSETAWLSHRTLEKFDAPLGATEMGLIYVNPEGPDRNGDPISAAKFIRETFARMAMNDEETVALIGGGHTFGKTHGAAAESHKGPDPEAAALEAQGLGWASNYGTGHGADTIGSGLEVTWTQTPAQWSNFFFENLFKYEWVQTRSPAGAIQWEAKDGPDIIPDAHNPEKKHKPTMLTTDLSLRFDPIYEKISRRFLENPQAFAEAFARAWFKLTHRDLGPRSRYLGPEVPREVLLWQDPVPAVDHPLIDDADAAALKAKVLASGLTVSELVGTAWASASTFRGGDKRGGANGARIRLAPQKDWAVNQPEQIDKVLKALTRIQGEFNLNASDGKKVSLADVIVLAGNAGVEEAAKAAGHDVSVPFAPGRTDASQAETDADSFKWLEPAADGFRNYQKDGLAVPAEVALIDKAQLLTLTAPELTVLIGGLRAININVDGAKHGVFTDKPGALTTDFFTNLLDMSTQWKAAGESNDVYEGRDRQTGELKWTGTRVDLVFGSNSILRALAEVYAASDAKDKFVTDFVAAWTKVMNLDRFDLA</sequence>